<protein>
    <recommendedName>
        <fullName evidence="1">Chaperone protein HtpG</fullName>
    </recommendedName>
    <alternativeName>
        <fullName evidence="1">Heat shock protein HtpG</fullName>
    </alternativeName>
    <alternativeName>
        <fullName evidence="1">High temperature protein G</fullName>
    </alternativeName>
</protein>
<evidence type="ECO:0000255" key="1">
    <source>
        <dbReference type="HAMAP-Rule" id="MF_00505"/>
    </source>
</evidence>
<dbReference type="EMBL" id="BA000012">
    <property type="protein sequence ID" value="BAB49250.1"/>
    <property type="molecule type" value="Genomic_DNA"/>
</dbReference>
<dbReference type="RefSeq" id="WP_010910602.1">
    <property type="nucleotide sequence ID" value="NC_002678.2"/>
</dbReference>
<dbReference type="SMR" id="Q98JB6"/>
<dbReference type="KEGG" id="mlo:mlr2017"/>
<dbReference type="PATRIC" id="fig|266835.9.peg.1621"/>
<dbReference type="eggNOG" id="COG0326">
    <property type="taxonomic scope" value="Bacteria"/>
</dbReference>
<dbReference type="HOGENOM" id="CLU_006684_3_0_5"/>
<dbReference type="Proteomes" id="UP000000552">
    <property type="component" value="Chromosome"/>
</dbReference>
<dbReference type="GO" id="GO:0005737">
    <property type="term" value="C:cytoplasm"/>
    <property type="evidence" value="ECO:0007669"/>
    <property type="project" value="UniProtKB-SubCell"/>
</dbReference>
<dbReference type="GO" id="GO:0005524">
    <property type="term" value="F:ATP binding"/>
    <property type="evidence" value="ECO:0007669"/>
    <property type="project" value="UniProtKB-UniRule"/>
</dbReference>
<dbReference type="GO" id="GO:0016887">
    <property type="term" value="F:ATP hydrolysis activity"/>
    <property type="evidence" value="ECO:0007669"/>
    <property type="project" value="InterPro"/>
</dbReference>
<dbReference type="GO" id="GO:0140662">
    <property type="term" value="F:ATP-dependent protein folding chaperone"/>
    <property type="evidence" value="ECO:0007669"/>
    <property type="project" value="InterPro"/>
</dbReference>
<dbReference type="GO" id="GO:0051082">
    <property type="term" value="F:unfolded protein binding"/>
    <property type="evidence" value="ECO:0007669"/>
    <property type="project" value="UniProtKB-UniRule"/>
</dbReference>
<dbReference type="CDD" id="cd16927">
    <property type="entry name" value="HATPase_Hsp90-like"/>
    <property type="match status" value="1"/>
</dbReference>
<dbReference type="Gene3D" id="3.30.230.80">
    <property type="match status" value="1"/>
</dbReference>
<dbReference type="Gene3D" id="3.40.50.11260">
    <property type="match status" value="1"/>
</dbReference>
<dbReference type="Gene3D" id="1.20.120.790">
    <property type="entry name" value="Heat shock protein 90, C-terminal domain"/>
    <property type="match status" value="1"/>
</dbReference>
<dbReference type="Gene3D" id="3.30.565.10">
    <property type="entry name" value="Histidine kinase-like ATPase, C-terminal domain"/>
    <property type="match status" value="1"/>
</dbReference>
<dbReference type="HAMAP" id="MF_00505">
    <property type="entry name" value="HSP90"/>
    <property type="match status" value="1"/>
</dbReference>
<dbReference type="InterPro" id="IPR036890">
    <property type="entry name" value="HATPase_C_sf"/>
</dbReference>
<dbReference type="InterPro" id="IPR019805">
    <property type="entry name" value="Heat_shock_protein_90_CS"/>
</dbReference>
<dbReference type="InterPro" id="IPR037196">
    <property type="entry name" value="HSP90_C"/>
</dbReference>
<dbReference type="InterPro" id="IPR001404">
    <property type="entry name" value="Hsp90_fam"/>
</dbReference>
<dbReference type="InterPro" id="IPR020575">
    <property type="entry name" value="Hsp90_N"/>
</dbReference>
<dbReference type="InterPro" id="IPR020568">
    <property type="entry name" value="Ribosomal_Su5_D2-typ_SF"/>
</dbReference>
<dbReference type="NCBIfam" id="NF003555">
    <property type="entry name" value="PRK05218.1"/>
    <property type="match status" value="1"/>
</dbReference>
<dbReference type="PANTHER" id="PTHR11528">
    <property type="entry name" value="HEAT SHOCK PROTEIN 90 FAMILY MEMBER"/>
    <property type="match status" value="1"/>
</dbReference>
<dbReference type="Pfam" id="PF13589">
    <property type="entry name" value="HATPase_c_3"/>
    <property type="match status" value="1"/>
</dbReference>
<dbReference type="Pfam" id="PF00183">
    <property type="entry name" value="HSP90"/>
    <property type="match status" value="1"/>
</dbReference>
<dbReference type="PIRSF" id="PIRSF002583">
    <property type="entry name" value="Hsp90"/>
    <property type="match status" value="1"/>
</dbReference>
<dbReference type="PRINTS" id="PR00775">
    <property type="entry name" value="HEATSHOCK90"/>
</dbReference>
<dbReference type="SMART" id="SM00387">
    <property type="entry name" value="HATPase_c"/>
    <property type="match status" value="1"/>
</dbReference>
<dbReference type="SUPFAM" id="SSF55874">
    <property type="entry name" value="ATPase domain of HSP90 chaperone/DNA topoisomerase II/histidine kinase"/>
    <property type="match status" value="1"/>
</dbReference>
<dbReference type="SUPFAM" id="SSF110942">
    <property type="entry name" value="HSP90 C-terminal domain"/>
    <property type="match status" value="1"/>
</dbReference>
<dbReference type="SUPFAM" id="SSF54211">
    <property type="entry name" value="Ribosomal protein S5 domain 2-like"/>
    <property type="match status" value="1"/>
</dbReference>
<dbReference type="PROSITE" id="PS00298">
    <property type="entry name" value="HSP90"/>
    <property type="match status" value="1"/>
</dbReference>
<gene>
    <name evidence="1" type="primary">htpG</name>
    <name type="ordered locus">mlr2017</name>
</gene>
<name>HTPG_RHILO</name>
<accession>Q98JB6</accession>
<sequence length="628" mass="69283">MTTDTKATETRAFEADVSRLLHMMVHSVYSDKDVFLRELISNAADACEKLRFEAVSRPELLGDDPKPRISISADPDNKEITVEDNGIGMSRDDMAEALGTIARSGTRAFIERVGSGTEDTQLIGQFGVGFYSAFMVADRVDVISRLAGSEEAWRWSSDGKGSYEIAPAPLEAAPRRGTRVVLHLMDDAVSYTGSYRLEQLAKSQSGHVPVPITLIEKPGAEARDIADGTALWVRPKSEIKPEEYTDFYRSVAGQYDEPAATIHFRAEGRQEYSVLAFVPGSRPFDLFDQDRKGRMKLYVRRVFITDDADLLPRYLRFVRGLVDSADLPLNVSREMIQESPLLASIRKGLTNRVLGDLAKLAENEAEAYAKVWENFGVVLKEGLYEDYERREQLLKLARFHSTASGEGWRGLADYVAAMKEGQKAIFFMAGDDRARLEASPQLEGFKARGIEVLLLTDPVDSFWVTMAPDFDGKPFKSVTQGVAELSDIPLLDDAKKPDTAAAPEVDGFLAFVKSALGDAVSDVKASDRLTESAVCLVAPEHGPDRQFERLMNAAGRLDKAAKPILEINPRHERVLALAGLGDEDQAFKDDAAHLLYDEARVLDGDKPADARAFSERLARLIARGIAKG</sequence>
<proteinExistence type="inferred from homology"/>
<reference key="1">
    <citation type="journal article" date="2000" name="DNA Res.">
        <title>Complete genome structure of the nitrogen-fixing symbiotic bacterium Mesorhizobium loti.</title>
        <authorList>
            <person name="Kaneko T."/>
            <person name="Nakamura Y."/>
            <person name="Sato S."/>
            <person name="Asamizu E."/>
            <person name="Kato T."/>
            <person name="Sasamoto S."/>
            <person name="Watanabe A."/>
            <person name="Idesawa K."/>
            <person name="Ishikawa A."/>
            <person name="Kawashima K."/>
            <person name="Kimura T."/>
            <person name="Kishida Y."/>
            <person name="Kiyokawa C."/>
            <person name="Kohara M."/>
            <person name="Matsumoto M."/>
            <person name="Matsuno A."/>
            <person name="Mochizuki Y."/>
            <person name="Nakayama S."/>
            <person name="Nakazaki N."/>
            <person name="Shimpo S."/>
            <person name="Sugimoto M."/>
            <person name="Takeuchi C."/>
            <person name="Yamada M."/>
            <person name="Tabata S."/>
        </authorList>
    </citation>
    <scope>NUCLEOTIDE SEQUENCE [LARGE SCALE GENOMIC DNA]</scope>
    <source>
        <strain>LMG 29417 / CECT 9101 / MAFF 303099</strain>
    </source>
</reference>
<feature type="chain" id="PRO_0000063007" description="Chaperone protein HtpG">
    <location>
        <begin position="1"/>
        <end position="628"/>
    </location>
</feature>
<feature type="region of interest" description="A; substrate-binding" evidence="1">
    <location>
        <begin position="1"/>
        <end position="333"/>
    </location>
</feature>
<feature type="region of interest" description="B" evidence="1">
    <location>
        <begin position="334"/>
        <end position="549"/>
    </location>
</feature>
<feature type="region of interest" description="C" evidence="1">
    <location>
        <begin position="550"/>
        <end position="628"/>
    </location>
</feature>
<comment type="function">
    <text evidence="1">Molecular chaperone. Has ATPase activity.</text>
</comment>
<comment type="subunit">
    <text evidence="1">Homodimer.</text>
</comment>
<comment type="subcellular location">
    <subcellularLocation>
        <location evidence="1">Cytoplasm</location>
    </subcellularLocation>
</comment>
<comment type="similarity">
    <text evidence="1">Belongs to the heat shock protein 90 family.</text>
</comment>
<keyword id="KW-0067">ATP-binding</keyword>
<keyword id="KW-0143">Chaperone</keyword>
<keyword id="KW-0963">Cytoplasm</keyword>
<keyword id="KW-0547">Nucleotide-binding</keyword>
<keyword id="KW-0346">Stress response</keyword>
<organism>
    <name type="scientific">Mesorhizobium japonicum (strain LMG 29417 / CECT 9101 / MAFF 303099)</name>
    <name type="common">Mesorhizobium loti (strain MAFF 303099)</name>
    <dbReference type="NCBI Taxonomy" id="266835"/>
    <lineage>
        <taxon>Bacteria</taxon>
        <taxon>Pseudomonadati</taxon>
        <taxon>Pseudomonadota</taxon>
        <taxon>Alphaproteobacteria</taxon>
        <taxon>Hyphomicrobiales</taxon>
        <taxon>Phyllobacteriaceae</taxon>
        <taxon>Mesorhizobium</taxon>
    </lineage>
</organism>